<comment type="function">
    <text evidence="2 3 4 5">CRISPR (clustered regularly interspaced short palindromic repeat), is an adaptive immune system that provides protection against mobile genetic elements (viruses, transposable elements and conjugative plasmids). CRISPR clusters contain sequences complementary to antecedent mobile elements (spacers) and target invading nucleic acids. Unlike many single-component effectors, this CRISPR-Cas system targets RNA (PubMed:27256883, PubMed:28086085). CRISPR clusters are transcribed from pre-CRISPR RNA (crRNA) and processed into crRNA (optimally 28 nucleotides in this system) by this protein (PubMed:27256883, PubMed:27669025, PubMed:28086085, PubMed:28475872). This protein processes pre-crRNA at a 'non-typical' site 1 nucleotide upstream of the pre-crRNA stem-loop; it cleaves pre-crRNA from L.buccalis and L.wadei in a similar fashion, whereas the enzymes from the latter 2 bacteria cleave their own pre-crRNA 3 nt further upstream (PubMed:28475872). When the appropriate target sequences are cloned into the CRISPR array, confers immunity to ssRNA(+) enterobacteria phage MS2 (PubMed:27256883). Cleaves linear target ssRNA in a crRNA-dependent fashion, preferentially before U residues; has no activity on partially dsRNA, ssDNA or dsDNA (PubMed:27256883). RNA secondary structure surrounding the target influence the cleavage site and efficiency; unlike other CRISPR-Cas effectors Cas13a cleaves outside of the crRNA binding site (PubMed:27256883). In the presence of a viable RNA target other RNAs are also degraded (called collateral RNA degradation), suggesting this type of CRISPR-Cas might also prevent viral spread by inducing programmed cell death or dormancy (PubMed:27256883). This system has a 3' protospacer flanking site (PFS), it does not cleave when the 3' PFS is G (PFS is equivalent to PAM, the protospacer adjacent motif) (PubMed:27256883). Mutations of its active site residues results in an RNA-programmed RNA-binding protein (PubMed:27256883).</text>
</comment>
<comment type="cofactor">
    <cofactor evidence="2">
        <name>Mg(2+)</name>
        <dbReference type="ChEBI" id="CHEBI:18420"/>
    </cofactor>
    <text evidence="2">ssRNA target cleavage requires Mg(2+), weak target cleavage is seen with Mn(2+) and Ca(2+).</text>
</comment>
<comment type="activity regulation">
    <text evidence="2">RNase activity on target is decreased by EDTA (PubMed:27256883). Target RNA acts as an activator for non-specific ssRNA degradation (PubMed:27256883).</text>
</comment>
<comment type="subunit">
    <text evidence="10">Monomer (PubMed:27256883).</text>
</comment>
<comment type="domain">
    <text evidence="4 9 10">The target ssRNase active sites are within the 2 HEPN-like folds which interact in vivo (PubMed:26593719, PubMed:27256883, PubMed:28086085). The X-ray structure in complex with crRNA shows a crRNA-recognition lobe (REC, residues 1-498) which makes most of the contacts with crRNA and is essential for pre-crRNA cleavage, and a nuclease lobe (NUC, residues 499-1389) which also makes a few contacts with the crRNA repeat and is responsible for target ssRNA cleavage (PubMed:28086085). Binding of crRNA induces conformational changes that probably stabilize crRNA-binding and facilitate target ssRNA recognition (PubMed:28086085). Mutagenesis of the crRNA and this protein show the stem loop and 3'-direct repeat of the crRNA are essential for target ssRNase while the 5'-end of the crRNA and its bulge-containing stem are essential for pre-crRNA cleavage (PubMed:28086085).</text>
</comment>
<comment type="biotechnology">
    <text evidence="2">Can be reprogrammed to target specific mRNAs in an E.coli system, which might be useful to create specific RNA-targeting tools (PubMed:27256883).</text>
</comment>
<comment type="miscellaneous">
    <text evidence="9 12 13">Part of a type VI-A uridine-preferring CRISPR-Cas system.</text>
</comment>
<comment type="similarity">
    <text evidence="12">Belongs to the CRISPR-associated endoribonuclease Cas13a family.</text>
</comment>
<gene>
    <name evidence="8" type="primary">cas13a</name>
    <name evidence="6" type="synonym">c2c2</name>
</gene>
<sequence>MGNLFGHKRWYEVRDKKDFKIKRKVKVKRNYDGNKYILNINENNNKEKIDNNKFIRKYINYKKNDNILKEFTRKFHAGNILFKLKGKEGIIRIENNDDFLETEEVVLYIEAYGKSEKLKALGITKKKIIDEAIRQGITKDDKKIEIKRQENEEEIEIDIRDEYTNKTLNDCSIILRIIENDELETKKSIYEIFKNINMSLYKIIEKIIENETEKVFENRYYEEHLREKLLKDDKIDVILTNFMEIREKIKSNLEILGFVKFYLNVGGDKKKSKNKKMLVEKILNINVDLTVEDIADFVIKELEFWNITKRIEKVKKVNNEFLEKRRNRTYIKSYVLLDKHEKFKIERENKKDKIVKFFVENIKNNSIKEKIEKILAEFKIDELIKKLEKELKKGNCDTEIFGIFKKHYKVNFDSKKFSKKSDEEKELYKIIYRYLKGRIEKILVNEQKVRLKKMEKIEIEKILNESILSEKILKRVKQYTLEHIMYLGKLRHNDIDMTTVNTDDFSRLHAKEELDLELITFFASTNMELNKIFSRENINNDENIDFFGGDREKNYVLDKKILNSKIKIIRDLDFIDNKNNITNNFIRKFTKIGTNERNRILHAISKERDLQGTQDDYNKVINIIQNLKISDEEVSKALNLDVVFKDKKNIITKINDIKISEENNNDIKYLPSFSKVLPEILNLYRNNPKNEPFDTIETEKIVLNALIYVNKELYKKLILEDDLEENESKNIFLQELKKTLGNIDEIDENIIENYYKNAQISASKGNNKAIKKYQKKVIECYIGYLRKNYEELFDFSDFKMNIQEIKKQIKDINDNKTYERITVKTSDKTIVINDDFEYIISIFALLNSNAVINKIRNRFFATSVWLNTSEYQNIIDILDEIMQLNTLRNECITENWNLNLEEFIQKMKEIEKDFDDFKIQTKKEIFNNYYEDIKNNILTEFKDDINGCDVLEKKLEKIVIFDDETKFEIDKKSNILQDEQRKLSNINKKDLKKKVDQYIKDKDQEIKSKILCRIIFNSDFLKKYKKEIDNLIEDMESENENKFQEIYYPKERKNELYIYKKNLFLNIGNPNFDKIYGLISNDIKMADAKFLFNIDGKNIRKNKISEIDAILKNLNDKLNGYSKEYKEKYIKKLKENDDFFAKNIQNKNYKSFEKDYNRVSEYKKIRDLVEFNYLNKIESYLIDINWKLAIQMARFERDMHYIVNGLRELGIIKLSGYNTGISRAYPKRNGSDGFYTTTAYYKFFDEESYKKFEKICYGFGIDLSENSEINKPENESIRNYISHFYIVRNPFADYSIAEQIDRVSNLLSYSTRYNNSTYASVFEVFKKDVNLDYDELKKKFKLIGNNDILERLMKPKKVSVLELESYNSDYIKNLIIELLTKIENTNDTL</sequence>
<protein>
    <recommendedName>
        <fullName evidence="8">CRISPR-associated endoribonuclease Cas13a</fullName>
        <ecNumber evidence="2">3.1.-.-</ecNumber>
    </recommendedName>
    <alternativeName>
        <fullName evidence="7">CRISPR-associated endoribonuclease C2c2</fullName>
        <shortName>EndoRNase</shortName>
    </alternativeName>
    <alternativeName>
        <fullName evidence="6">LshC2c2</fullName>
    </alternativeName>
</protein>
<evidence type="ECO:0000255" key="1"/>
<evidence type="ECO:0000269" key="2">
    <source>
    </source>
</evidence>
<evidence type="ECO:0000269" key="3">
    <source>
    </source>
</evidence>
<evidence type="ECO:0000269" key="4">
    <source>
    </source>
</evidence>
<evidence type="ECO:0000269" key="5">
    <source>
    </source>
</evidence>
<evidence type="ECO:0000303" key="6">
    <source>
    </source>
</evidence>
<evidence type="ECO:0000303" key="7">
    <source>
    </source>
</evidence>
<evidence type="ECO:0000303" key="8">
    <source>
    </source>
</evidence>
<evidence type="ECO:0000305" key="9">
    <source>
    </source>
</evidence>
<evidence type="ECO:0000305" key="10">
    <source>
    </source>
</evidence>
<evidence type="ECO:0000305" key="11">
    <source>
    </source>
</evidence>
<evidence type="ECO:0000305" key="12">
    <source>
    </source>
</evidence>
<evidence type="ECO:0000305" key="13">
    <source>
    </source>
</evidence>
<evidence type="ECO:0007744" key="14">
    <source>
        <dbReference type="PDB" id="5WTJ"/>
    </source>
</evidence>
<evidence type="ECO:0007744" key="15">
    <source>
        <dbReference type="PDB" id="5WTK"/>
    </source>
</evidence>
<evidence type="ECO:0007829" key="16">
    <source>
        <dbReference type="PDB" id="5WTK"/>
    </source>
</evidence>
<evidence type="ECO:0007829" key="17">
    <source>
        <dbReference type="PDB" id="7DMQ"/>
    </source>
</evidence>
<keyword id="KW-0002">3D-structure</keyword>
<keyword id="KW-0051">Antiviral defense</keyword>
<keyword id="KW-0175">Coiled coil</keyword>
<keyword id="KW-0255">Endonuclease</keyword>
<keyword id="KW-0378">Hydrolase</keyword>
<keyword id="KW-0460">Magnesium</keyword>
<keyword id="KW-0540">Nuclease</keyword>
<keyword id="KW-0677">Repeat</keyword>
<keyword id="KW-0694">RNA-binding</keyword>
<accession>P0DOC6</accession>
<feature type="chain" id="PRO_0000437503" description="CRISPR-associated endoribonuclease Cas13a">
    <location>
        <begin position="1"/>
        <end position="1389"/>
    </location>
</feature>
<feature type="region of interest" description="NTD" evidence="11">
    <location>
        <begin position="1"/>
        <end position="347"/>
    </location>
</feature>
<feature type="region of interest" description="Binds crRNA" evidence="4">
    <location>
        <begin position="330"/>
        <end position="342"/>
    </location>
</feature>
<feature type="region of interest" description="Helical-1" evidence="9 10 11">
    <location>
        <begin position="348"/>
        <end position="498"/>
    </location>
</feature>
<feature type="region of interest" description="Binds crRNA" evidence="4">
    <location>
        <begin position="405"/>
        <end position="408"/>
    </location>
</feature>
<feature type="region of interest" description="Binds crRNA" evidence="4">
    <location>
        <begin position="432"/>
        <end position="436"/>
    </location>
</feature>
<feature type="region of interest" description="Binds crRNA" evidence="4">
    <location>
        <begin position="471"/>
        <end position="475"/>
    </location>
</feature>
<feature type="region of interest" description="HEPN-like fold 1-I" evidence="9 10 11">
    <location>
        <begin position="499"/>
        <end position="636"/>
    </location>
</feature>
<feature type="region of interest" description="Binds crRNA" evidence="4">
    <location>
        <begin position="502"/>
        <end position="509"/>
    </location>
</feature>
<feature type="region of interest" description="Helical-2" evidence="9 10 11">
    <location>
        <begin position="637"/>
        <end position="828"/>
    </location>
</feature>
<feature type="region of interest" description="HEPN-like fold 1-II" evidence="11">
    <location>
        <begin position="829"/>
        <end position="899"/>
    </location>
</feature>
<feature type="region of interest" description="Binds crRNA" evidence="4">
    <location>
        <begin position="853"/>
        <end position="858"/>
    </location>
</feature>
<feature type="region of interest" description="Linker" evidence="9 10 11">
    <location>
        <begin position="900"/>
        <end position="1170"/>
    </location>
</feature>
<feature type="region of interest" description="HEPN-like fold 2" evidence="9 10 11">
    <location>
        <begin position="1170"/>
        <end position="1290"/>
    </location>
</feature>
<feature type="region of interest" description="Binds crRNA" evidence="4">
    <location>
        <begin position="1311"/>
        <end position="1316"/>
    </location>
</feature>
<feature type="region of interest" description="Binds crRNA" evidence="4">
    <location>
        <begin position="1338"/>
        <end position="1339"/>
    </location>
</feature>
<feature type="coiled-coil region" evidence="1">
    <location>
        <begin position="893"/>
        <end position="920"/>
    </location>
</feature>
<feature type="coiled-coil region" evidence="1">
    <location>
        <begin position="968"/>
        <end position="1046"/>
    </location>
</feature>
<feature type="coiled-coil region" evidence="1">
    <location>
        <begin position="1101"/>
        <end position="1131"/>
    </location>
</feature>
<feature type="active site" description="For pre-crRNA processing" evidence="11">
    <location>
        <position position="438"/>
    </location>
</feature>
<feature type="active site" description="For pre-crRNA processing" evidence="11">
    <location>
        <position position="441"/>
    </location>
</feature>
<feature type="active site" description="For target ssRNA cleavage" evidence="10">
    <location>
        <position position="597"/>
    </location>
</feature>
<feature type="active site" description="For target ssRNA cleavage" evidence="10">
    <location>
        <position position="602"/>
    </location>
</feature>
<feature type="active site" description="For target ssRNA cleavage" evidence="10">
    <location>
        <position position="1278"/>
    </location>
</feature>
<feature type="active site" description="For target ssRNA cleavage" evidence="10">
    <location>
        <position position="1283"/>
    </location>
</feature>
<feature type="binding site" evidence="4">
    <location>
        <position position="219"/>
    </location>
    <ligand>
        <name>crRNA</name>
        <dbReference type="ChEBI" id="CHEBI:134528"/>
    </ligand>
</feature>
<feature type="binding site" evidence="4">
    <location>
        <position position="441"/>
    </location>
    <ligand>
        <name>crRNA</name>
        <dbReference type="ChEBI" id="CHEBI:134528"/>
    </ligand>
</feature>
<feature type="binding site" evidence="4">
    <location>
        <position position="489"/>
    </location>
    <ligand>
        <name>crRNA</name>
        <dbReference type="ChEBI" id="CHEBI:134528"/>
    </ligand>
</feature>
<feature type="binding site" evidence="4">
    <location>
        <position position="759"/>
    </location>
    <ligand>
        <name>crRNA</name>
        <dbReference type="ChEBI" id="CHEBI:134528"/>
    </ligand>
</feature>
<feature type="binding site" evidence="4">
    <location>
        <position position="865"/>
    </location>
    <ligand>
        <name>crRNA</name>
        <dbReference type="ChEBI" id="CHEBI:134528"/>
    </ligand>
</feature>
<feature type="mutagenesis site" description="Wild-type cleavage of target RNA and pre-crRNA processing." evidence="4">
    <original>Y</original>
    <variation>A</variation>
    <location>
        <position position="330"/>
    </location>
</feature>
<feature type="mutagenesis site" description="No cleavage of target RNA, no change in pre-crRNA processing." evidence="4">
    <original>Y</original>
    <variation>A</variation>
    <location>
        <position position="334"/>
    </location>
</feature>
<feature type="mutagenesis site" description="No pre-crRNA processing." evidence="4">
    <original>R</original>
    <variation>A</variation>
    <location>
        <position position="438"/>
    </location>
</feature>
<feature type="mutagenesis site" description="No pre-crRNA processing." evidence="4">
    <original>K</original>
    <variation>A</variation>
    <location>
        <position position="441"/>
    </location>
</feature>
<feature type="mutagenesis site" description="Severely impairs pre-crRNA processing." evidence="4">
    <original>K</original>
    <variation>A</variation>
    <location>
        <position position="471"/>
    </location>
</feature>
<feature type="mutagenesis site" description="No cleavage of target ssRNA, no change in pre-crRNA processing." evidence="4">
    <original>H</original>
    <variation>A</variation>
    <location>
        <position position="509"/>
    </location>
</feature>
<feature type="mutagenesis site" description="No longer protects against infection by MS2 phage, loss of ssRNase activity." evidence="2">
    <original>R</original>
    <variation>A</variation>
    <location>
        <position position="597"/>
    </location>
</feature>
<feature type="mutagenesis site" description="No cleavage of target RNA." evidence="4">
    <original>N</original>
    <variation>A</variation>
    <location>
        <position position="598"/>
    </location>
</feature>
<feature type="mutagenesis site" description="No longer protects against infection by MS2 phage, loss of ssRNase activity." evidence="2">
    <original>H</original>
    <variation>A</variation>
    <location>
        <position position="602"/>
    </location>
</feature>
<feature type="mutagenesis site" description="No cleavage of target RNA, no change in pre-crRNA processing." evidence="4">
    <original>R</original>
    <variation>A</variation>
    <location>
        <position position="858"/>
    </location>
</feature>
<feature type="mutagenesis site" description="No cleavage of target RNA, decreased pre-crRNA processing." evidence="4">
    <original>W</original>
    <variation>A</variation>
    <location>
        <position position="865"/>
    </location>
</feature>
<feature type="mutagenesis site" description="No longer protects against infection by MS2 phage, loss of ssRNase activity, still binds both crRNA and target ssRNA." evidence="2">
    <original>R</original>
    <variation>A</variation>
    <location>
        <position position="1278"/>
    </location>
</feature>
<feature type="mutagenesis site" description="No cleavage of target RNA." evidence="4">
    <original>N</original>
    <variation>A</variation>
    <location>
        <position position="1279"/>
    </location>
</feature>
<feature type="mutagenesis site" description="No longer protects against infection by MS2 phage, loss of ssRNase activity." evidence="2">
    <original>H</original>
    <variation>A</variation>
    <location>
        <position position="1283"/>
    </location>
</feature>
<feature type="mutagenesis site" description="No cleavage of target RNA, no change in pre-crRNA processing." evidence="4">
    <original>R</original>
    <variation>A</variation>
    <location>
        <position position="1312"/>
    </location>
</feature>
<feature type="mutagenesis site" description="Wild-type cleavage of target RNA, decreased pre-crRNA processing." evidence="4">
    <original>N</original>
    <variation>A</variation>
    <location>
        <position position="1315"/>
    </location>
</feature>
<feature type="mutagenesis site" description="Wild-type cleavage of target RNA and pre-crRNA processing." evidence="4">
    <original>S</original>
    <variation>A</variation>
    <location>
        <position position="1316"/>
    </location>
</feature>
<feature type="strand" evidence="16">
    <location>
        <begin position="4"/>
        <end position="8"/>
    </location>
</feature>
<feature type="strand" evidence="16">
    <location>
        <begin position="11"/>
        <end position="14"/>
    </location>
</feature>
<feature type="strand" evidence="16">
    <location>
        <begin position="16"/>
        <end position="25"/>
    </location>
</feature>
<feature type="strand" evidence="16">
    <location>
        <begin position="27"/>
        <end position="31"/>
    </location>
</feature>
<feature type="strand" evidence="16">
    <location>
        <begin position="33"/>
        <end position="40"/>
    </location>
</feature>
<feature type="strand" evidence="16">
    <location>
        <begin position="42"/>
        <end position="44"/>
    </location>
</feature>
<feature type="helix" evidence="16">
    <location>
        <begin position="51"/>
        <end position="63"/>
    </location>
</feature>
<feature type="helix" evidence="16">
    <location>
        <begin position="67"/>
        <end position="74"/>
    </location>
</feature>
<feature type="turn" evidence="16">
    <location>
        <begin position="77"/>
        <end position="79"/>
    </location>
</feature>
<feature type="strand" evidence="16">
    <location>
        <begin position="80"/>
        <end position="82"/>
    </location>
</feature>
<feature type="helix" evidence="16">
    <location>
        <begin position="184"/>
        <end position="208"/>
    </location>
</feature>
<feature type="helix" evidence="16">
    <location>
        <begin position="221"/>
        <end position="230"/>
    </location>
</feature>
<feature type="helix" evidence="16">
    <location>
        <begin position="235"/>
        <end position="250"/>
    </location>
</feature>
<feature type="helix" evidence="16">
    <location>
        <begin position="254"/>
        <end position="262"/>
    </location>
</feature>
<feature type="strand" evidence="16">
    <location>
        <begin position="267"/>
        <end position="269"/>
    </location>
</feature>
<feature type="helix" evidence="16">
    <location>
        <begin position="273"/>
        <end position="282"/>
    </location>
</feature>
<feature type="strand" evidence="16">
    <location>
        <begin position="285"/>
        <end position="287"/>
    </location>
</feature>
<feature type="helix" evidence="16">
    <location>
        <begin position="291"/>
        <end position="304"/>
    </location>
</feature>
<feature type="helix" evidence="16">
    <location>
        <begin position="320"/>
        <end position="334"/>
    </location>
</feature>
<feature type="helix" evidence="16">
    <location>
        <begin position="339"/>
        <end position="345"/>
    </location>
</feature>
<feature type="helix" evidence="16">
    <location>
        <begin position="350"/>
        <end position="364"/>
    </location>
</feature>
<feature type="helix" evidence="16">
    <location>
        <begin position="367"/>
        <end position="377"/>
    </location>
</feature>
<feature type="helix" evidence="16">
    <location>
        <begin position="380"/>
        <end position="393"/>
    </location>
</feature>
<feature type="helix" evidence="16">
    <location>
        <begin position="399"/>
        <end position="411"/>
    </location>
</feature>
<feature type="strand" evidence="16">
    <location>
        <begin position="415"/>
        <end position="417"/>
    </location>
</feature>
<feature type="helix" evidence="16">
    <location>
        <begin position="422"/>
        <end position="450"/>
    </location>
</feature>
<feature type="strand" evidence="17">
    <location>
        <begin position="451"/>
        <end position="453"/>
    </location>
</feature>
<feature type="helix" evidence="16">
    <location>
        <begin position="460"/>
        <end position="463"/>
    </location>
</feature>
<feature type="helix" evidence="16">
    <location>
        <begin position="465"/>
        <end position="493"/>
    </location>
</feature>
<feature type="helix" evidence="16">
    <location>
        <begin position="502"/>
        <end position="532"/>
    </location>
</feature>
<feature type="strand" evidence="16">
    <location>
        <begin position="533"/>
        <end position="539"/>
    </location>
</feature>
<feature type="strand" evidence="17">
    <location>
        <begin position="547"/>
        <end position="549"/>
    </location>
</feature>
<feature type="strand" evidence="16">
    <location>
        <begin position="555"/>
        <end position="557"/>
    </location>
</feature>
<feature type="strand" evidence="17">
    <location>
        <begin position="558"/>
        <end position="560"/>
    </location>
</feature>
<feature type="helix" evidence="16">
    <location>
        <begin position="564"/>
        <end position="571"/>
    </location>
</feature>
<feature type="helix" evidence="16">
    <location>
        <begin position="577"/>
        <end position="579"/>
    </location>
</feature>
<feature type="helix" evidence="16">
    <location>
        <begin position="583"/>
        <end position="587"/>
    </location>
</feature>
<feature type="helix" evidence="16">
    <location>
        <begin position="590"/>
        <end position="601"/>
    </location>
</feature>
<feature type="strand" evidence="16">
    <location>
        <begin position="611"/>
        <end position="613"/>
    </location>
</feature>
<feature type="helix" evidence="16">
    <location>
        <begin position="616"/>
        <end position="629"/>
    </location>
</feature>
<feature type="turn" evidence="16">
    <location>
        <begin position="633"/>
        <end position="635"/>
    </location>
</feature>
<feature type="turn" evidence="16">
    <location>
        <begin position="638"/>
        <end position="644"/>
    </location>
</feature>
<feature type="helix" evidence="16">
    <location>
        <begin position="648"/>
        <end position="655"/>
    </location>
</feature>
<feature type="turn" evidence="16">
    <location>
        <begin position="664"/>
        <end position="666"/>
    </location>
</feature>
<feature type="helix" evidence="16">
    <location>
        <begin position="667"/>
        <end position="669"/>
    </location>
</feature>
<feature type="helix" evidence="16">
    <location>
        <begin position="673"/>
        <end position="686"/>
    </location>
</feature>
<feature type="strand" evidence="16">
    <location>
        <begin position="687"/>
        <end position="689"/>
    </location>
</feature>
<feature type="turn" evidence="16">
    <location>
        <begin position="696"/>
        <end position="698"/>
    </location>
</feature>
<feature type="helix" evidence="16">
    <location>
        <begin position="699"/>
        <end position="719"/>
    </location>
</feature>
<feature type="helix" evidence="16">
    <location>
        <begin position="732"/>
        <end position="740"/>
    </location>
</feature>
<feature type="helix" evidence="16">
    <location>
        <begin position="750"/>
        <end position="761"/>
    </location>
</feature>
<feature type="turn" evidence="16">
    <location>
        <begin position="762"/>
        <end position="765"/>
    </location>
</feature>
<feature type="helix" evidence="16">
    <location>
        <begin position="769"/>
        <end position="788"/>
    </location>
</feature>
<feature type="helix" evidence="16">
    <location>
        <begin position="791"/>
        <end position="793"/>
    </location>
</feature>
<feature type="helix" evidence="16">
    <location>
        <begin position="803"/>
        <end position="811"/>
    </location>
</feature>
<feature type="helix" evidence="16">
    <location>
        <begin position="835"/>
        <end position="844"/>
    </location>
</feature>
<feature type="helix" evidence="16">
    <location>
        <begin position="849"/>
        <end position="866"/>
    </location>
</feature>
<feature type="helix" evidence="16">
    <location>
        <begin position="872"/>
        <end position="894"/>
    </location>
</feature>
<feature type="helix" evidence="16">
    <location>
        <begin position="902"/>
        <end position="912"/>
    </location>
</feature>
<feature type="strand" evidence="16">
    <location>
        <begin position="1008"/>
        <end position="1011"/>
    </location>
</feature>
<feature type="helix" evidence="16">
    <location>
        <begin position="1012"/>
        <end position="1014"/>
    </location>
</feature>
<feature type="helix" evidence="16">
    <location>
        <begin position="1018"/>
        <end position="1032"/>
    </location>
</feature>
<feature type="strand" evidence="16">
    <location>
        <begin position="1041"/>
        <end position="1044"/>
    </location>
</feature>
<feature type="turn" evidence="16">
    <location>
        <begin position="1045"/>
        <end position="1047"/>
    </location>
</feature>
<feature type="turn" evidence="16">
    <location>
        <begin position="1050"/>
        <end position="1052"/>
    </location>
</feature>
<feature type="helix" evidence="16">
    <location>
        <begin position="1053"/>
        <end position="1055"/>
    </location>
</feature>
<feature type="helix" evidence="16">
    <location>
        <begin position="1061"/>
        <end position="1064"/>
    </location>
</feature>
<feature type="turn" evidence="17">
    <location>
        <begin position="1065"/>
        <end position="1068"/>
    </location>
</feature>
<feature type="helix" evidence="16">
    <location>
        <begin position="1070"/>
        <end position="1076"/>
    </location>
</feature>
<feature type="turn" evidence="16">
    <location>
        <begin position="1077"/>
        <end position="1079"/>
    </location>
</feature>
<feature type="helix" evidence="16">
    <location>
        <begin position="1080"/>
        <end position="1085"/>
    </location>
</feature>
<feature type="turn" evidence="16">
    <location>
        <begin position="1089"/>
        <end position="1091"/>
    </location>
</feature>
<feature type="helix" evidence="16">
    <location>
        <begin position="1094"/>
        <end position="1102"/>
    </location>
</feature>
<feature type="helix" evidence="16">
    <location>
        <begin position="1104"/>
        <end position="1118"/>
    </location>
</feature>
<feature type="helix" evidence="16">
    <location>
        <begin position="1123"/>
        <end position="1135"/>
    </location>
</feature>
<feature type="helix" evidence="16">
    <location>
        <begin position="1137"/>
        <end position="1141"/>
    </location>
</feature>
<feature type="strand" evidence="16">
    <location>
        <begin position="1143"/>
        <end position="1148"/>
    </location>
</feature>
<feature type="helix" evidence="16">
    <location>
        <begin position="1149"/>
        <end position="1169"/>
    </location>
</feature>
<feature type="helix" evidence="16">
    <location>
        <begin position="1172"/>
        <end position="1208"/>
    </location>
</feature>
<feature type="turn" evidence="16">
    <location>
        <begin position="1209"/>
        <end position="1211"/>
    </location>
</feature>
<feature type="strand" evidence="16">
    <location>
        <begin position="1214"/>
        <end position="1217"/>
    </location>
</feature>
<feature type="strand" evidence="16">
    <location>
        <begin position="1231"/>
        <end position="1233"/>
    </location>
</feature>
<feature type="helix" evidence="16">
    <location>
        <begin position="1234"/>
        <end position="1237"/>
    </location>
</feature>
<feature type="strand" evidence="16">
    <location>
        <begin position="1238"/>
        <end position="1245"/>
    </location>
</feature>
<feature type="helix" evidence="16">
    <location>
        <begin position="1246"/>
        <end position="1258"/>
    </location>
</feature>
<feature type="strand" evidence="16">
    <location>
        <begin position="1264"/>
        <end position="1271"/>
    </location>
</feature>
<feature type="turn" evidence="16">
    <location>
        <begin position="1272"/>
        <end position="1275"/>
    </location>
</feature>
<feature type="helix" evidence="16">
    <location>
        <begin position="1277"/>
        <end position="1282"/>
    </location>
</feature>
<feature type="turn" evidence="16">
    <location>
        <begin position="1283"/>
        <end position="1287"/>
    </location>
</feature>
<feature type="strand" evidence="16">
    <location>
        <begin position="1292"/>
        <end position="1294"/>
    </location>
</feature>
<feature type="helix" evidence="16">
    <location>
        <begin position="1296"/>
        <end position="1306"/>
    </location>
</feature>
<feature type="turn" evidence="16">
    <location>
        <begin position="1307"/>
        <end position="1309"/>
    </location>
</feature>
<feature type="helix" evidence="16">
    <location>
        <begin position="1311"/>
        <end position="1313"/>
    </location>
</feature>
<feature type="helix" evidence="16">
    <location>
        <begin position="1316"/>
        <end position="1322"/>
    </location>
</feature>
<feature type="turn" evidence="16">
    <location>
        <begin position="1326"/>
        <end position="1328"/>
    </location>
</feature>
<feature type="strand" evidence="17">
    <location>
        <begin position="1329"/>
        <end position="1331"/>
    </location>
</feature>
<feature type="helix" evidence="16">
    <location>
        <begin position="1333"/>
        <end position="1337"/>
    </location>
</feature>
<feature type="strand" evidence="16">
    <location>
        <begin position="1342"/>
        <end position="1345"/>
    </location>
</feature>
<feature type="helix" evidence="16">
    <location>
        <begin position="1347"/>
        <end position="1349"/>
    </location>
</feature>
<feature type="strand" evidence="17">
    <location>
        <begin position="1352"/>
        <end position="1355"/>
    </location>
</feature>
<feature type="turn" evidence="16">
    <location>
        <begin position="1359"/>
        <end position="1362"/>
    </location>
</feature>
<feature type="helix" evidence="16">
    <location>
        <begin position="1369"/>
        <end position="1380"/>
    </location>
</feature>
<proteinExistence type="evidence at protein level"/>
<organism>
    <name type="scientific">Leptotrichia shahii (strain DSM 19757 / CCUG 47503 / CIP 107916 / JCM 16776 / LB37)</name>
    <dbReference type="NCBI Taxonomy" id="1122172"/>
    <lineage>
        <taxon>Bacteria</taxon>
        <taxon>Fusobacteriati</taxon>
        <taxon>Fusobacteriota</taxon>
        <taxon>Fusobacteriia</taxon>
        <taxon>Fusobacteriales</taxon>
        <taxon>Leptotrichiaceae</taxon>
        <taxon>Leptotrichia</taxon>
    </lineage>
</organism>
<dbReference type="EC" id="3.1.-.-" evidence="2"/>
<dbReference type="EMBL" id="ARDD01000012">
    <property type="status" value="NOT_ANNOTATED_CDS"/>
    <property type="molecule type" value="Genomic_DNA"/>
</dbReference>
<dbReference type="RefSeq" id="WP_018451595.1">
    <property type="nucleotide sequence ID" value="NZ_KB890278.1"/>
</dbReference>
<dbReference type="PDB" id="5WTJ">
    <property type="method" value="X-ray"/>
    <property type="resolution" value="3.50 A"/>
    <property type="chains" value="A/B=1-1389"/>
</dbReference>
<dbReference type="PDB" id="5WTK">
    <property type="method" value="X-ray"/>
    <property type="resolution" value="2.65 A"/>
    <property type="chains" value="A=1-1389"/>
</dbReference>
<dbReference type="PDB" id="7DMQ">
    <property type="method" value="EM"/>
    <property type="resolution" value="3.06 A"/>
    <property type="chains" value="A=1-1389"/>
</dbReference>
<dbReference type="PDBsum" id="5WTJ"/>
<dbReference type="PDBsum" id="5WTK"/>
<dbReference type="PDBsum" id="7DMQ"/>
<dbReference type="SMR" id="P0DOC6"/>
<dbReference type="GO" id="GO:0004519">
    <property type="term" value="F:endonuclease activity"/>
    <property type="evidence" value="ECO:0007669"/>
    <property type="project" value="UniProtKB-KW"/>
</dbReference>
<dbReference type="GO" id="GO:0003723">
    <property type="term" value="F:RNA binding"/>
    <property type="evidence" value="ECO:0007669"/>
    <property type="project" value="UniProtKB-KW"/>
</dbReference>
<dbReference type="GO" id="GO:0051607">
    <property type="term" value="P:defense response to virus"/>
    <property type="evidence" value="ECO:0007669"/>
    <property type="project" value="UniProtKB-KW"/>
</dbReference>
<dbReference type="DisProt" id="DP02509"/>
<dbReference type="InterPro" id="IPR053395">
    <property type="entry name" value="Cas13a_endoribonuclease"/>
</dbReference>
<dbReference type="NCBIfam" id="NF038188">
    <property type="entry name" value="cas13A_C2c2"/>
    <property type="match status" value="1"/>
</dbReference>
<name>CS13A_LEPSD</name>
<reference key="1">
    <citation type="submission" date="2013-04" db="EMBL/GenBank/DDBJ databases">
        <authorList>
            <person name="Kyrpides N."/>
            <person name="Huntemann M."/>
            <person name="Han J."/>
            <person name="Chen A."/>
            <person name="Mavromatis K."/>
            <person name="Markowitz V."/>
            <person name="Palaniappan K."/>
            <person name="Ivanova N."/>
            <person name="Schaumberg A."/>
            <person name="Pati A."/>
            <person name="Liolios K."/>
            <person name="Nordberg H.P."/>
            <person name="Cantor M.N."/>
            <person name="Hua S.X."/>
            <person name="Woyke T."/>
        </authorList>
    </citation>
    <scope>NUCLEOTIDE SEQUENCE [LARGE SCALE GENOMIC DNA]</scope>
    <source>
        <strain>DSM 19757 / CCUG 47503 / CIP 107916 / JCM 16776 / LB37</strain>
    </source>
</reference>
<reference key="2">
    <citation type="journal article" date="2015" name="Mol. Cell">
        <title>Discovery and functional characterization of diverse class 2 CRISPR-Cas systems.</title>
        <authorList>
            <person name="Shmakov S."/>
            <person name="Abudayyeh O.O."/>
            <person name="Makarova K.S."/>
            <person name="Wolf Y.I."/>
            <person name="Gootenberg J.S."/>
            <person name="Semenova E."/>
            <person name="Minakhin L."/>
            <person name="Joung J."/>
            <person name="Konermann S."/>
            <person name="Severinov K."/>
            <person name="Zhang F."/>
            <person name="Koonin E.V."/>
        </authorList>
    </citation>
    <scope>IDENTIFICATION</scope>
    <scope>DOMAIN</scope>
</reference>
<reference key="3">
    <citation type="journal article" date="2016" name="Science">
        <title>C2c2 is a single-component programmable RNA-guided RNA-targeting CRISPR effector.</title>
        <authorList>
            <person name="Abudayyeh O.O."/>
            <person name="Gootenberg J.S."/>
            <person name="Konermann S."/>
            <person name="Joung J."/>
            <person name="Slaymaker I.M."/>
            <person name="Cox D.B."/>
            <person name="Shmakov S."/>
            <person name="Makarova K.S."/>
            <person name="Semenova E."/>
            <person name="Minakhin L."/>
            <person name="Severinov K."/>
            <person name="Regev A."/>
            <person name="Lander E.S."/>
            <person name="Koonin E.V."/>
            <person name="Zhang F."/>
        </authorList>
    </citation>
    <scope>FUNCTION IN RNA PHAGE RESISTANCE</scope>
    <scope>FUNCTION AS AN SS-RNASE</scope>
    <scope>ACTIVE SITE</scope>
    <scope>COFACTOR</scope>
    <scope>ACTIVITY REGULATION</scope>
    <scope>SUBUNIT</scope>
    <scope>DOMAIN</scope>
    <scope>BIOTECHNOLOGY</scope>
    <scope>MUTAGENESIS OF ARG-597; HIS-602; ARG-1278 AND HIS-1283</scope>
    <scope>RNA-BINDING</scope>
    <source>
        <strain>DSM 19757 / CCUG 47503 / CIP 107916 / JCM 16776 / LB37</strain>
    </source>
</reference>
<reference key="4">
    <citation type="journal article" date="2016" name="Nature">
        <title>Two distinct RNase activities of CRISPR-C2c2 enable guide-RNA processing and RNA detection.</title>
        <authorList>
            <person name="East-Seletsky A."/>
            <person name="O'Connell M.R."/>
            <person name="Knight S.C."/>
            <person name="Burstein D."/>
            <person name="Cate J.H."/>
            <person name="Tjian R."/>
            <person name="Doudna J.A."/>
        </authorList>
    </citation>
    <scope>FUNCTION IN CRRNA PROCESSING</scope>
    <scope>FUNCTION AS AN ENDORIBONUCLEASE</scope>
    <source>
        <strain>DSM 19757 / CCUG 47503 / CIP 107916 / JCM 16776 / LB37</strain>
    </source>
</reference>
<reference key="5">
    <citation type="journal article" date="2017" name="Mol. Cell">
        <title>RNA targeting by functionally orthogonal type VI-A CRISPR-Cas enzymes.</title>
        <authorList>
            <person name="East-Seletsky A."/>
            <person name="O'Connell M.R."/>
            <person name="Burstein D."/>
            <person name="Knott G.J."/>
            <person name="Doudna J.A."/>
        </authorList>
    </citation>
    <scope>FUNCTION IN CRRNA PROCESSING</scope>
    <scope>FUNCTION AS AN ENDORIBONUCLEASE</scope>
</reference>
<reference key="6">
    <citation type="journal article" date="2017" name="Nat. Rev. Microbiol.">
        <title>Diversity and evolution of class 2 CRISPR-Cas systems.</title>
        <authorList>
            <person name="Shmakov S."/>
            <person name="Smargon A."/>
            <person name="Scott D."/>
            <person name="Cox D."/>
            <person name="Pyzocha N."/>
            <person name="Yan W."/>
            <person name="Abudayyeh O.O."/>
            <person name="Gootenberg J.S."/>
            <person name="Makarova K.S."/>
            <person name="Wolf Y.I."/>
            <person name="Severinov K."/>
            <person name="Zhang F."/>
            <person name="Koonin E.V."/>
        </authorList>
    </citation>
    <scope>NOMENCLATURE</scope>
</reference>
<reference key="7">
    <citation type="journal article" date="2023" name="Nat. Commun.">
        <title>Assessing and advancing the safety of CRISPR-Cas tools: from DNA to RNA editing.</title>
        <authorList>
            <person name="Tao J."/>
            <person name="Bauer D.E."/>
            <person name="Chiarle R."/>
        </authorList>
    </citation>
    <scope>REVIEW ON SAFETY OF GENOME EDITING TOOLS</scope>
</reference>
<reference evidence="14 15" key="8">
    <citation type="journal article" date="2017" name="Cell">
        <title>Two distant catalytic sites are responsible for C2c2 RNase activities.</title>
        <authorList>
            <person name="Liu L."/>
            <person name="Li X."/>
            <person name="Wang J."/>
            <person name="Wang M."/>
            <person name="Chen P."/>
            <person name="Yin M."/>
            <person name="Li J."/>
            <person name="Sheng G."/>
            <person name="Wang Y."/>
        </authorList>
    </citation>
    <scope>X-RAY CRYSTALLOGRAPHY (2.65 ANGSTROMS) WITH AND WITHOUT CRRNA</scope>
    <scope>FUNCTION IN CRRNA PROCESSING</scope>
    <scope>FUNCTION IN TARGET SSRNA CLEAVAGE</scope>
    <scope>FUNCTION AS AN ENDORIBONUCLEASE</scope>
    <scope>ACTIVE SITE</scope>
    <scope>DOMAIN</scope>
    <scope>MUTAGENESIS OF TYR-330; TYR-334; ARG-438; LYS-441; LYS-471; HIS-509; ASN-598; ARG-858; TRP-865; ASN-1279; ARG-1312; ASN-1315 AND SER-1316</scope>
    <scope>RNA-BINDING</scope>
</reference>